<keyword id="KW-0963">Cytoplasm</keyword>
<keyword id="KW-0456">Lyase</keyword>
<keyword id="KW-1185">Reference proteome</keyword>
<keyword id="KW-0816">Tricarboxylic acid cycle</keyword>
<dbReference type="EC" id="4.2.1.2" evidence="1"/>
<dbReference type="EMBL" id="AL590842">
    <property type="protein sequence ID" value="CAL20891.1"/>
    <property type="molecule type" value="Genomic_DNA"/>
</dbReference>
<dbReference type="EMBL" id="AE009952">
    <property type="protein sequence ID" value="AAM85669.1"/>
    <property type="molecule type" value="Genomic_DNA"/>
</dbReference>
<dbReference type="EMBL" id="AE017042">
    <property type="protein sequence ID" value="AAS62274.1"/>
    <property type="status" value="ALT_INIT"/>
    <property type="molecule type" value="Genomic_DNA"/>
</dbReference>
<dbReference type="PIR" id="AH0275">
    <property type="entry name" value="AH0275"/>
</dbReference>
<dbReference type="RefSeq" id="WP_002210578.1">
    <property type="nucleotide sequence ID" value="NZ_WUCM01000001.1"/>
</dbReference>
<dbReference type="RefSeq" id="YP_008853946.1">
    <property type="nucleotide sequence ID" value="NC_003143.1"/>
</dbReference>
<dbReference type="SMR" id="Q8ZEB6"/>
<dbReference type="STRING" id="214092.YPO2264"/>
<dbReference type="PaxDb" id="214092-YPO2264"/>
<dbReference type="DNASU" id="1147053"/>
<dbReference type="EnsemblBacteria" id="AAS62274">
    <property type="protein sequence ID" value="AAS62274"/>
    <property type="gene ID" value="YP_2061"/>
</dbReference>
<dbReference type="GeneID" id="57976406"/>
<dbReference type="KEGG" id="ype:YPO2264"/>
<dbReference type="KEGG" id="ypk:y2106"/>
<dbReference type="KEGG" id="ypm:YP_2061"/>
<dbReference type="eggNOG" id="COG0114">
    <property type="taxonomic scope" value="Bacteria"/>
</dbReference>
<dbReference type="HOGENOM" id="CLU_021594_4_1_6"/>
<dbReference type="OMA" id="AKWRAQT"/>
<dbReference type="OrthoDB" id="9802809at2"/>
<dbReference type="UniPathway" id="UPA00223">
    <property type="reaction ID" value="UER01007"/>
</dbReference>
<dbReference type="Proteomes" id="UP000000815">
    <property type="component" value="Chromosome"/>
</dbReference>
<dbReference type="Proteomes" id="UP000001019">
    <property type="component" value="Chromosome"/>
</dbReference>
<dbReference type="Proteomes" id="UP000002490">
    <property type="component" value="Chromosome"/>
</dbReference>
<dbReference type="GO" id="GO:0005737">
    <property type="term" value="C:cytoplasm"/>
    <property type="evidence" value="ECO:0007669"/>
    <property type="project" value="UniProtKB-SubCell"/>
</dbReference>
<dbReference type="GO" id="GO:0004333">
    <property type="term" value="F:fumarate hydratase activity"/>
    <property type="evidence" value="ECO:0000318"/>
    <property type="project" value="GO_Central"/>
</dbReference>
<dbReference type="GO" id="GO:0006106">
    <property type="term" value="P:fumarate metabolic process"/>
    <property type="evidence" value="ECO:0000318"/>
    <property type="project" value="GO_Central"/>
</dbReference>
<dbReference type="GO" id="GO:0006108">
    <property type="term" value="P:malate metabolic process"/>
    <property type="evidence" value="ECO:0000318"/>
    <property type="project" value="GO_Central"/>
</dbReference>
<dbReference type="GO" id="GO:0006099">
    <property type="term" value="P:tricarboxylic acid cycle"/>
    <property type="evidence" value="ECO:0000318"/>
    <property type="project" value="GO_Central"/>
</dbReference>
<dbReference type="CDD" id="cd01362">
    <property type="entry name" value="Fumarase_classII"/>
    <property type="match status" value="1"/>
</dbReference>
<dbReference type="FunFam" id="1.10.40.30:FF:000002">
    <property type="entry name" value="Fumarate hydratase class II"/>
    <property type="match status" value="1"/>
</dbReference>
<dbReference type="FunFam" id="1.10.275.10:FF:000001">
    <property type="entry name" value="Fumarate hydratase, mitochondrial"/>
    <property type="match status" value="1"/>
</dbReference>
<dbReference type="FunFam" id="1.20.200.10:FF:000001">
    <property type="entry name" value="Fumarate hydratase, mitochondrial"/>
    <property type="match status" value="1"/>
</dbReference>
<dbReference type="Gene3D" id="1.10.40.30">
    <property type="entry name" value="Fumarase/aspartase (C-terminal domain)"/>
    <property type="match status" value="1"/>
</dbReference>
<dbReference type="Gene3D" id="1.20.200.10">
    <property type="entry name" value="Fumarase/aspartase (Central domain)"/>
    <property type="match status" value="1"/>
</dbReference>
<dbReference type="Gene3D" id="1.10.275.10">
    <property type="entry name" value="Fumarase/aspartase (N-terminal domain)"/>
    <property type="match status" value="1"/>
</dbReference>
<dbReference type="HAMAP" id="MF_00743">
    <property type="entry name" value="FumaraseC"/>
    <property type="match status" value="1"/>
</dbReference>
<dbReference type="InterPro" id="IPR005677">
    <property type="entry name" value="Fum_hydII"/>
</dbReference>
<dbReference type="InterPro" id="IPR024083">
    <property type="entry name" value="Fumarase/histidase_N"/>
</dbReference>
<dbReference type="InterPro" id="IPR018951">
    <property type="entry name" value="Fumarase_C_C"/>
</dbReference>
<dbReference type="InterPro" id="IPR020557">
    <property type="entry name" value="Fumarate_lyase_CS"/>
</dbReference>
<dbReference type="InterPro" id="IPR000362">
    <property type="entry name" value="Fumarate_lyase_fam"/>
</dbReference>
<dbReference type="InterPro" id="IPR022761">
    <property type="entry name" value="Fumarate_lyase_N"/>
</dbReference>
<dbReference type="InterPro" id="IPR008948">
    <property type="entry name" value="L-Aspartase-like"/>
</dbReference>
<dbReference type="NCBIfam" id="TIGR00979">
    <property type="entry name" value="fumC_II"/>
    <property type="match status" value="1"/>
</dbReference>
<dbReference type="NCBIfam" id="NF008909">
    <property type="entry name" value="PRK12273.1"/>
    <property type="match status" value="1"/>
</dbReference>
<dbReference type="PANTHER" id="PTHR11444">
    <property type="entry name" value="ASPARTATEAMMONIA/ARGININOSUCCINATE/ADENYLOSUCCINATE LYASE"/>
    <property type="match status" value="1"/>
</dbReference>
<dbReference type="PANTHER" id="PTHR11444:SF1">
    <property type="entry name" value="FUMARATE HYDRATASE, MITOCHONDRIAL"/>
    <property type="match status" value="1"/>
</dbReference>
<dbReference type="Pfam" id="PF10415">
    <property type="entry name" value="FumaraseC_C"/>
    <property type="match status" value="1"/>
</dbReference>
<dbReference type="Pfam" id="PF00206">
    <property type="entry name" value="Lyase_1"/>
    <property type="match status" value="1"/>
</dbReference>
<dbReference type="PRINTS" id="PR00145">
    <property type="entry name" value="ARGSUCLYASE"/>
</dbReference>
<dbReference type="PRINTS" id="PR00149">
    <property type="entry name" value="FUMRATELYASE"/>
</dbReference>
<dbReference type="SUPFAM" id="SSF48557">
    <property type="entry name" value="L-aspartase-like"/>
    <property type="match status" value="1"/>
</dbReference>
<dbReference type="PROSITE" id="PS00163">
    <property type="entry name" value="FUMARATE_LYASES"/>
    <property type="match status" value="1"/>
</dbReference>
<comment type="function">
    <text evidence="1">Involved in the TCA cycle. Catalyzes the stereospecific interconversion of fumarate to L-malate.</text>
</comment>
<comment type="catalytic activity">
    <reaction evidence="1">
        <text>(S)-malate = fumarate + H2O</text>
        <dbReference type="Rhea" id="RHEA:12460"/>
        <dbReference type="ChEBI" id="CHEBI:15377"/>
        <dbReference type="ChEBI" id="CHEBI:15589"/>
        <dbReference type="ChEBI" id="CHEBI:29806"/>
        <dbReference type="EC" id="4.2.1.2"/>
    </reaction>
</comment>
<comment type="pathway">
    <text evidence="1">Carbohydrate metabolism; tricarboxylic acid cycle; (S)-malate from fumarate: step 1/1.</text>
</comment>
<comment type="subunit">
    <text evidence="1">Homotetramer.</text>
</comment>
<comment type="subcellular location">
    <subcellularLocation>
        <location evidence="1">Cytoplasm</location>
    </subcellularLocation>
</comment>
<comment type="miscellaneous">
    <text evidence="1">There are 2 substrate-binding sites: the catalytic A site, and the non-catalytic B site that may play a role in the transfer of substrate or product between the active site and the solvent. Alternatively, the B site may bind allosteric effectors.</text>
</comment>
<comment type="similarity">
    <text evidence="1">Belongs to the class-II fumarase/aspartase family. Fumarase subfamily.</text>
</comment>
<comment type="sequence caution" evidence="2">
    <conflict type="erroneous initiation">
        <sequence resource="EMBL-CDS" id="AAS62274"/>
    </conflict>
    <text>Extended N-terminus.</text>
</comment>
<organism>
    <name type="scientific">Yersinia pestis</name>
    <dbReference type="NCBI Taxonomy" id="632"/>
    <lineage>
        <taxon>Bacteria</taxon>
        <taxon>Pseudomonadati</taxon>
        <taxon>Pseudomonadota</taxon>
        <taxon>Gammaproteobacteria</taxon>
        <taxon>Enterobacterales</taxon>
        <taxon>Yersiniaceae</taxon>
        <taxon>Yersinia</taxon>
    </lineage>
</organism>
<proteinExistence type="inferred from homology"/>
<gene>
    <name evidence="1" type="primary">fumC</name>
    <name type="ordered locus">YPO2264</name>
    <name type="ordered locus">y2106</name>
    <name type="ordered locus">YP_2061</name>
</gene>
<protein>
    <recommendedName>
        <fullName evidence="1">Fumarate hydratase class II</fullName>
        <shortName evidence="1">Fumarase C</shortName>
        <ecNumber evidence="1">4.2.1.2</ecNumber>
    </recommendedName>
    <alternativeName>
        <fullName evidence="1">Aerobic fumarase</fullName>
    </alternativeName>
    <alternativeName>
        <fullName evidence="1">Iron-independent fumarase</fullName>
    </alternativeName>
</protein>
<sequence length="465" mass="50129">MATTRSEKDSMGSIDVPANQLWGAQTQRSLAHFRISQEKMPTELIHALALTKRAAAQVNMDLGLLPAERAKAIMRAADEVLDGAHPTEFPLAIWQTGSGTQTNMNMNEVLANRASELLGGARGNNRLVHPNDDVNKSQSSNDVFPTAMHVAAVMGVSEHLLPELKVLQKTLADKAEAYRDIVKIGRTHLQDATPLTLGQEISGWAAMLSHSVRHIEATLPHLCELALGGTAVGTGLNTHPEYAVRVANEIATLTRQPFITAPNKFESLGTCDALVHGHGALKGLAASLMKIANDVRWLSSGPRCGIGEISIPENEPGSSIMPGKVNPTQCEAMTMLCAQVMGNDVAINIGGASGNFELNVFRPLVIHNFLQSVRLLADGMRGFNEHCALGIEPNRDRITQLLNESLMLVTALNTHIGYDKAAEIAKKAHKEGLTLKAAAMALGYLTDAEFDEWVRPEDMVGSMKK</sequence>
<reference key="1">
    <citation type="journal article" date="2001" name="Nature">
        <title>Genome sequence of Yersinia pestis, the causative agent of plague.</title>
        <authorList>
            <person name="Parkhill J."/>
            <person name="Wren B.W."/>
            <person name="Thomson N.R."/>
            <person name="Titball R.W."/>
            <person name="Holden M.T.G."/>
            <person name="Prentice M.B."/>
            <person name="Sebaihia M."/>
            <person name="James K.D."/>
            <person name="Churcher C.M."/>
            <person name="Mungall K.L."/>
            <person name="Baker S."/>
            <person name="Basham D."/>
            <person name="Bentley S.D."/>
            <person name="Brooks K."/>
            <person name="Cerdeno-Tarraga A.-M."/>
            <person name="Chillingworth T."/>
            <person name="Cronin A."/>
            <person name="Davies R.M."/>
            <person name="Davis P."/>
            <person name="Dougan G."/>
            <person name="Feltwell T."/>
            <person name="Hamlin N."/>
            <person name="Holroyd S."/>
            <person name="Jagels K."/>
            <person name="Karlyshev A.V."/>
            <person name="Leather S."/>
            <person name="Moule S."/>
            <person name="Oyston P.C.F."/>
            <person name="Quail M.A."/>
            <person name="Rutherford K.M."/>
            <person name="Simmonds M."/>
            <person name="Skelton J."/>
            <person name="Stevens K."/>
            <person name="Whitehead S."/>
            <person name="Barrell B.G."/>
        </authorList>
    </citation>
    <scope>NUCLEOTIDE SEQUENCE [LARGE SCALE GENOMIC DNA]</scope>
    <source>
        <strain>CO-92 / Biovar Orientalis</strain>
    </source>
</reference>
<reference key="2">
    <citation type="journal article" date="2002" name="J. Bacteriol.">
        <title>Genome sequence of Yersinia pestis KIM.</title>
        <authorList>
            <person name="Deng W."/>
            <person name="Burland V."/>
            <person name="Plunkett G. III"/>
            <person name="Boutin A."/>
            <person name="Mayhew G.F."/>
            <person name="Liss P."/>
            <person name="Perna N.T."/>
            <person name="Rose D.J."/>
            <person name="Mau B."/>
            <person name="Zhou S."/>
            <person name="Schwartz D.C."/>
            <person name="Fetherston J.D."/>
            <person name="Lindler L.E."/>
            <person name="Brubaker R.R."/>
            <person name="Plano G.V."/>
            <person name="Straley S.C."/>
            <person name="McDonough K.A."/>
            <person name="Nilles M.L."/>
            <person name="Matson J.S."/>
            <person name="Blattner F.R."/>
            <person name="Perry R.D."/>
        </authorList>
    </citation>
    <scope>NUCLEOTIDE SEQUENCE [LARGE SCALE GENOMIC DNA]</scope>
    <source>
        <strain>KIM10+ / Biovar Mediaevalis</strain>
    </source>
</reference>
<reference key="3">
    <citation type="journal article" date="2004" name="DNA Res.">
        <title>Complete genome sequence of Yersinia pestis strain 91001, an isolate avirulent to humans.</title>
        <authorList>
            <person name="Song Y."/>
            <person name="Tong Z."/>
            <person name="Wang J."/>
            <person name="Wang L."/>
            <person name="Guo Z."/>
            <person name="Han Y."/>
            <person name="Zhang J."/>
            <person name="Pei D."/>
            <person name="Zhou D."/>
            <person name="Qin H."/>
            <person name="Pang X."/>
            <person name="Han Y."/>
            <person name="Zhai J."/>
            <person name="Li M."/>
            <person name="Cui B."/>
            <person name="Qi Z."/>
            <person name="Jin L."/>
            <person name="Dai R."/>
            <person name="Chen F."/>
            <person name="Li S."/>
            <person name="Ye C."/>
            <person name="Du Z."/>
            <person name="Lin W."/>
            <person name="Wang J."/>
            <person name="Yu J."/>
            <person name="Yang H."/>
            <person name="Wang J."/>
            <person name="Huang P."/>
            <person name="Yang R."/>
        </authorList>
    </citation>
    <scope>NUCLEOTIDE SEQUENCE [LARGE SCALE GENOMIC DNA]</scope>
    <source>
        <strain>91001 / Biovar Mediaevalis</strain>
    </source>
</reference>
<name>FUMC_YERPE</name>
<accession>Q8ZEB6</accession>
<accession>Q0WEQ7</accession>
<evidence type="ECO:0000255" key="1">
    <source>
        <dbReference type="HAMAP-Rule" id="MF_00743"/>
    </source>
</evidence>
<evidence type="ECO:0000305" key="2"/>
<feature type="chain" id="PRO_0000161331" description="Fumarate hydratase class II">
    <location>
        <begin position="1"/>
        <end position="465"/>
    </location>
</feature>
<feature type="active site" description="Proton donor/acceptor" evidence="1">
    <location>
        <position position="188"/>
    </location>
</feature>
<feature type="active site" evidence="1">
    <location>
        <position position="318"/>
    </location>
</feature>
<feature type="binding site" evidence="1">
    <location>
        <begin position="98"/>
        <end position="100"/>
    </location>
    <ligand>
        <name>substrate</name>
    </ligand>
</feature>
<feature type="binding site" evidence="1">
    <location>
        <position position="126"/>
    </location>
    <ligand>
        <name>substrate</name>
    </ligand>
</feature>
<feature type="binding site" description="in site B" evidence="1">
    <location>
        <begin position="129"/>
        <end position="132"/>
    </location>
    <ligand>
        <name>substrate</name>
    </ligand>
</feature>
<feature type="binding site" evidence="1">
    <location>
        <begin position="139"/>
        <end position="141"/>
    </location>
    <ligand>
        <name>substrate</name>
    </ligand>
</feature>
<feature type="binding site" evidence="1">
    <location>
        <position position="187"/>
    </location>
    <ligand>
        <name>substrate</name>
    </ligand>
</feature>
<feature type="binding site" evidence="1">
    <location>
        <position position="319"/>
    </location>
    <ligand>
        <name>substrate</name>
    </ligand>
</feature>
<feature type="binding site" evidence="1">
    <location>
        <begin position="324"/>
        <end position="326"/>
    </location>
    <ligand>
        <name>substrate</name>
    </ligand>
</feature>
<feature type="site" description="Important for catalytic activity" evidence="1">
    <location>
        <position position="331"/>
    </location>
</feature>